<sequence>MQKNDDLLRERRKDEHVALGVKQNEQLAPSSLEDIQLIGTSIPRYNVKDIDLTTTIVGTNVPFPFYINAMTGGSRHTKKINAELAEIAREVAIPMAVGSQSAALKNSSLIDTYKIVREINPNGMILANISPEVALQEGLRAIEMLEADALQIHINPAQELVMQEGDRSFSHWLTRIEKYVKLSPVPVVVKEVGFGMTRETVATLASVGVQSVDLAGKGGTNFAQIENDRRRDQAYDFLLDWGISTGQALIDMQHQDAPKIAYLASGGIRNPLDIVKALALGADSVGMAGQIIYSLKKEGLTKTIEKLELWKEQLRSLFVLADAKNISELKTTPLIISGELAKWGTLREIDLVKLANRK</sequence>
<dbReference type="EC" id="5.3.3.2" evidence="1"/>
<dbReference type="EMBL" id="CP001175">
    <property type="protein sequence ID" value="ACK39534.1"/>
    <property type="molecule type" value="Genomic_DNA"/>
</dbReference>
<dbReference type="RefSeq" id="WP_012581351.1">
    <property type="nucleotide sequence ID" value="NC_011660.1"/>
</dbReference>
<dbReference type="SMR" id="B8DFU4"/>
<dbReference type="KEGG" id="lmh:LMHCC_1186"/>
<dbReference type="HOGENOM" id="CLU_065515_0_0_9"/>
<dbReference type="GO" id="GO:0005737">
    <property type="term" value="C:cytoplasm"/>
    <property type="evidence" value="ECO:0007669"/>
    <property type="project" value="UniProtKB-SubCell"/>
</dbReference>
<dbReference type="GO" id="GO:0010181">
    <property type="term" value="F:FMN binding"/>
    <property type="evidence" value="ECO:0007669"/>
    <property type="project" value="UniProtKB-UniRule"/>
</dbReference>
<dbReference type="GO" id="GO:0004452">
    <property type="term" value="F:isopentenyl-diphosphate delta-isomerase activity"/>
    <property type="evidence" value="ECO:0007669"/>
    <property type="project" value="UniProtKB-UniRule"/>
</dbReference>
<dbReference type="GO" id="GO:0000287">
    <property type="term" value="F:magnesium ion binding"/>
    <property type="evidence" value="ECO:0007669"/>
    <property type="project" value="UniProtKB-UniRule"/>
</dbReference>
<dbReference type="GO" id="GO:0070402">
    <property type="term" value="F:NADPH binding"/>
    <property type="evidence" value="ECO:0007669"/>
    <property type="project" value="UniProtKB-UniRule"/>
</dbReference>
<dbReference type="GO" id="GO:0016491">
    <property type="term" value="F:oxidoreductase activity"/>
    <property type="evidence" value="ECO:0007669"/>
    <property type="project" value="InterPro"/>
</dbReference>
<dbReference type="GO" id="GO:0008299">
    <property type="term" value="P:isoprenoid biosynthetic process"/>
    <property type="evidence" value="ECO:0007669"/>
    <property type="project" value="UniProtKB-UniRule"/>
</dbReference>
<dbReference type="CDD" id="cd02811">
    <property type="entry name" value="IDI-2_FMN"/>
    <property type="match status" value="1"/>
</dbReference>
<dbReference type="FunFam" id="3.20.20.70:FF:000283">
    <property type="entry name" value="Isopentenyl-diphosphate delta-isomerase"/>
    <property type="match status" value="1"/>
</dbReference>
<dbReference type="Gene3D" id="3.20.20.70">
    <property type="entry name" value="Aldolase class I"/>
    <property type="match status" value="1"/>
</dbReference>
<dbReference type="HAMAP" id="MF_00354">
    <property type="entry name" value="Idi_2"/>
    <property type="match status" value="1"/>
</dbReference>
<dbReference type="InterPro" id="IPR013785">
    <property type="entry name" value="Aldolase_TIM"/>
</dbReference>
<dbReference type="InterPro" id="IPR000262">
    <property type="entry name" value="FMN-dep_DH"/>
</dbReference>
<dbReference type="InterPro" id="IPR011179">
    <property type="entry name" value="IPdP_isomerase"/>
</dbReference>
<dbReference type="NCBIfam" id="TIGR02151">
    <property type="entry name" value="IPP_isom_2"/>
    <property type="match status" value="1"/>
</dbReference>
<dbReference type="PANTHER" id="PTHR43665">
    <property type="entry name" value="ISOPENTENYL-DIPHOSPHATE DELTA-ISOMERASE"/>
    <property type="match status" value="1"/>
</dbReference>
<dbReference type="PANTHER" id="PTHR43665:SF1">
    <property type="entry name" value="ISOPENTENYL-DIPHOSPHATE DELTA-ISOMERASE"/>
    <property type="match status" value="1"/>
</dbReference>
<dbReference type="Pfam" id="PF01070">
    <property type="entry name" value="FMN_dh"/>
    <property type="match status" value="1"/>
</dbReference>
<dbReference type="PIRSF" id="PIRSF003314">
    <property type="entry name" value="IPP_isomerase"/>
    <property type="match status" value="1"/>
</dbReference>
<dbReference type="SUPFAM" id="SSF51395">
    <property type="entry name" value="FMN-linked oxidoreductases"/>
    <property type="match status" value="1"/>
</dbReference>
<feature type="chain" id="PRO_1000133431" description="Isopentenyl-diphosphate delta-isomerase">
    <location>
        <begin position="1"/>
        <end position="358"/>
    </location>
</feature>
<feature type="binding site" evidence="1">
    <location>
        <begin position="12"/>
        <end position="13"/>
    </location>
    <ligand>
        <name>substrate</name>
    </ligand>
</feature>
<feature type="binding site" evidence="1">
    <location>
        <begin position="69"/>
        <end position="71"/>
    </location>
    <ligand>
        <name>FMN</name>
        <dbReference type="ChEBI" id="CHEBI:58210"/>
    </ligand>
</feature>
<feature type="binding site" evidence="1">
    <location>
        <position position="99"/>
    </location>
    <ligand>
        <name>FMN</name>
        <dbReference type="ChEBI" id="CHEBI:58210"/>
    </ligand>
</feature>
<feature type="binding site" evidence="1">
    <location>
        <position position="128"/>
    </location>
    <ligand>
        <name>FMN</name>
        <dbReference type="ChEBI" id="CHEBI:58210"/>
    </ligand>
</feature>
<feature type="binding site" evidence="1">
    <location>
        <position position="158"/>
    </location>
    <ligand>
        <name>substrate</name>
    </ligand>
</feature>
<feature type="binding site" evidence="1">
    <location>
        <position position="159"/>
    </location>
    <ligand>
        <name>Mg(2+)</name>
        <dbReference type="ChEBI" id="CHEBI:18420"/>
    </ligand>
</feature>
<feature type="binding site" evidence="1">
    <location>
        <position position="190"/>
    </location>
    <ligand>
        <name>FMN</name>
        <dbReference type="ChEBI" id="CHEBI:58210"/>
    </ligand>
</feature>
<feature type="binding site" evidence="1">
    <location>
        <position position="220"/>
    </location>
    <ligand>
        <name>FMN</name>
        <dbReference type="ChEBI" id="CHEBI:58210"/>
    </ligand>
</feature>
<feature type="binding site" evidence="1">
    <location>
        <begin position="267"/>
        <end position="269"/>
    </location>
    <ligand>
        <name>FMN</name>
        <dbReference type="ChEBI" id="CHEBI:58210"/>
    </ligand>
</feature>
<feature type="binding site" evidence="1">
    <location>
        <begin position="288"/>
        <end position="289"/>
    </location>
    <ligand>
        <name>FMN</name>
        <dbReference type="ChEBI" id="CHEBI:58210"/>
    </ligand>
</feature>
<protein>
    <recommendedName>
        <fullName evidence="1">Isopentenyl-diphosphate delta-isomerase</fullName>
        <shortName evidence="1">IPP isomerase</shortName>
        <ecNumber evidence="1">5.3.3.2</ecNumber>
    </recommendedName>
    <alternativeName>
        <fullName evidence="1">Isopentenyl diphosphate:dimethylallyl diphosphate isomerase</fullName>
    </alternativeName>
    <alternativeName>
        <fullName evidence="1">Isopentenyl pyrophosphate isomerase</fullName>
    </alternativeName>
    <alternativeName>
        <fullName evidence="1">Type 2 isopentenyl diphosphate isomerase</fullName>
        <shortName evidence="1">IDI-2</shortName>
    </alternativeName>
</protein>
<keyword id="KW-0963">Cytoplasm</keyword>
<keyword id="KW-0285">Flavoprotein</keyword>
<keyword id="KW-0288">FMN</keyword>
<keyword id="KW-0413">Isomerase</keyword>
<keyword id="KW-0414">Isoprene biosynthesis</keyword>
<keyword id="KW-0460">Magnesium</keyword>
<keyword id="KW-0479">Metal-binding</keyword>
<keyword id="KW-0521">NADP</keyword>
<proteinExistence type="inferred from homology"/>
<comment type="function">
    <text evidence="1">Involved in the biosynthesis of isoprenoids. Catalyzes the 1,3-allylic rearrangement of the homoallylic substrate isopentenyl (IPP) to its allylic isomer, dimethylallyl diphosphate (DMAPP).</text>
</comment>
<comment type="catalytic activity">
    <reaction evidence="1">
        <text>isopentenyl diphosphate = dimethylallyl diphosphate</text>
        <dbReference type="Rhea" id="RHEA:23284"/>
        <dbReference type="ChEBI" id="CHEBI:57623"/>
        <dbReference type="ChEBI" id="CHEBI:128769"/>
        <dbReference type="EC" id="5.3.3.2"/>
    </reaction>
</comment>
<comment type="cofactor">
    <cofactor evidence="1">
        <name>FMN</name>
        <dbReference type="ChEBI" id="CHEBI:58210"/>
    </cofactor>
</comment>
<comment type="cofactor">
    <cofactor evidence="1">
        <name>NADPH</name>
        <dbReference type="ChEBI" id="CHEBI:57783"/>
    </cofactor>
</comment>
<comment type="cofactor">
    <cofactor evidence="1">
        <name>Mg(2+)</name>
        <dbReference type="ChEBI" id="CHEBI:18420"/>
    </cofactor>
</comment>
<comment type="subunit">
    <text evidence="1">Homooctamer. Dimer of tetramers.</text>
</comment>
<comment type="subcellular location">
    <subcellularLocation>
        <location evidence="1">Cytoplasm</location>
    </subcellularLocation>
</comment>
<comment type="similarity">
    <text evidence="1">Belongs to the IPP isomerase type 2 family.</text>
</comment>
<reference key="1">
    <citation type="journal article" date="2011" name="J. Bacteriol.">
        <title>Genome sequence of lineage III Listeria monocytogenes strain HCC23.</title>
        <authorList>
            <person name="Steele C.L."/>
            <person name="Donaldson J.R."/>
            <person name="Paul D."/>
            <person name="Banes M.M."/>
            <person name="Arick T."/>
            <person name="Bridges S.M."/>
            <person name="Lawrence M.L."/>
        </authorList>
    </citation>
    <scope>NUCLEOTIDE SEQUENCE [LARGE SCALE GENOMIC DNA]</scope>
    <source>
        <strain>HCC23</strain>
    </source>
</reference>
<accession>B8DFU4</accession>
<evidence type="ECO:0000255" key="1">
    <source>
        <dbReference type="HAMAP-Rule" id="MF_00354"/>
    </source>
</evidence>
<gene>
    <name evidence="1" type="primary">fni</name>
    <name type="ordered locus">LMHCC_1186</name>
</gene>
<name>IDI2_LISMH</name>
<organism>
    <name type="scientific">Listeria monocytogenes serotype 4a (strain HCC23)</name>
    <dbReference type="NCBI Taxonomy" id="552536"/>
    <lineage>
        <taxon>Bacteria</taxon>
        <taxon>Bacillati</taxon>
        <taxon>Bacillota</taxon>
        <taxon>Bacilli</taxon>
        <taxon>Bacillales</taxon>
        <taxon>Listeriaceae</taxon>
        <taxon>Listeria</taxon>
    </lineage>
</organism>